<evidence type="ECO:0000255" key="1">
    <source>
        <dbReference type="HAMAP-Rule" id="MF_00145"/>
    </source>
</evidence>
<protein>
    <recommendedName>
        <fullName evidence="1">Phosphoglycerate kinase</fullName>
        <ecNumber evidence="1">2.7.2.3</ecNumber>
    </recommendedName>
</protein>
<dbReference type="EC" id="2.7.2.3" evidence="1"/>
<dbReference type="EMBL" id="CP000001">
    <property type="protein sequence ID" value="AAU15450.1"/>
    <property type="molecule type" value="Genomic_DNA"/>
</dbReference>
<dbReference type="RefSeq" id="WP_001036348.1">
    <property type="nucleotide sequence ID" value="NZ_CP009968.1"/>
</dbReference>
<dbReference type="KEGG" id="bcz:BCE33L4827"/>
<dbReference type="PATRIC" id="fig|288681.22.peg.526"/>
<dbReference type="UniPathway" id="UPA00109">
    <property type="reaction ID" value="UER00185"/>
</dbReference>
<dbReference type="Proteomes" id="UP000002612">
    <property type="component" value="Chromosome"/>
</dbReference>
<dbReference type="GO" id="GO:0005829">
    <property type="term" value="C:cytosol"/>
    <property type="evidence" value="ECO:0007669"/>
    <property type="project" value="TreeGrafter"/>
</dbReference>
<dbReference type="GO" id="GO:0043531">
    <property type="term" value="F:ADP binding"/>
    <property type="evidence" value="ECO:0007669"/>
    <property type="project" value="TreeGrafter"/>
</dbReference>
<dbReference type="GO" id="GO:0005524">
    <property type="term" value="F:ATP binding"/>
    <property type="evidence" value="ECO:0007669"/>
    <property type="project" value="UniProtKB-KW"/>
</dbReference>
<dbReference type="GO" id="GO:0004618">
    <property type="term" value="F:phosphoglycerate kinase activity"/>
    <property type="evidence" value="ECO:0007669"/>
    <property type="project" value="UniProtKB-UniRule"/>
</dbReference>
<dbReference type="GO" id="GO:0006094">
    <property type="term" value="P:gluconeogenesis"/>
    <property type="evidence" value="ECO:0007669"/>
    <property type="project" value="TreeGrafter"/>
</dbReference>
<dbReference type="GO" id="GO:0006096">
    <property type="term" value="P:glycolytic process"/>
    <property type="evidence" value="ECO:0007669"/>
    <property type="project" value="UniProtKB-UniRule"/>
</dbReference>
<dbReference type="CDD" id="cd00318">
    <property type="entry name" value="Phosphoglycerate_kinase"/>
    <property type="match status" value="1"/>
</dbReference>
<dbReference type="FunFam" id="3.40.50.1260:FF:000001">
    <property type="entry name" value="Phosphoglycerate kinase"/>
    <property type="match status" value="1"/>
</dbReference>
<dbReference type="FunFam" id="3.40.50.1260:FF:000002">
    <property type="entry name" value="Phosphoglycerate kinase"/>
    <property type="match status" value="1"/>
</dbReference>
<dbReference type="Gene3D" id="3.40.50.1260">
    <property type="entry name" value="Phosphoglycerate kinase, N-terminal domain"/>
    <property type="match status" value="2"/>
</dbReference>
<dbReference type="HAMAP" id="MF_00145">
    <property type="entry name" value="Phosphoglyc_kinase"/>
    <property type="match status" value="1"/>
</dbReference>
<dbReference type="InterPro" id="IPR001576">
    <property type="entry name" value="Phosphoglycerate_kinase"/>
</dbReference>
<dbReference type="InterPro" id="IPR015911">
    <property type="entry name" value="Phosphoglycerate_kinase_CS"/>
</dbReference>
<dbReference type="InterPro" id="IPR015824">
    <property type="entry name" value="Phosphoglycerate_kinase_N"/>
</dbReference>
<dbReference type="InterPro" id="IPR036043">
    <property type="entry name" value="Phosphoglycerate_kinase_sf"/>
</dbReference>
<dbReference type="PANTHER" id="PTHR11406">
    <property type="entry name" value="PHOSPHOGLYCERATE KINASE"/>
    <property type="match status" value="1"/>
</dbReference>
<dbReference type="PANTHER" id="PTHR11406:SF23">
    <property type="entry name" value="PHOSPHOGLYCERATE KINASE 1, CHLOROPLASTIC-RELATED"/>
    <property type="match status" value="1"/>
</dbReference>
<dbReference type="Pfam" id="PF00162">
    <property type="entry name" value="PGK"/>
    <property type="match status" value="1"/>
</dbReference>
<dbReference type="PIRSF" id="PIRSF000724">
    <property type="entry name" value="Pgk"/>
    <property type="match status" value="1"/>
</dbReference>
<dbReference type="PRINTS" id="PR00477">
    <property type="entry name" value="PHGLYCKINASE"/>
</dbReference>
<dbReference type="SUPFAM" id="SSF53748">
    <property type="entry name" value="Phosphoglycerate kinase"/>
    <property type="match status" value="1"/>
</dbReference>
<dbReference type="PROSITE" id="PS00111">
    <property type="entry name" value="PGLYCERATE_KINASE"/>
    <property type="match status" value="1"/>
</dbReference>
<name>PGK_BACCZ</name>
<feature type="chain" id="PRO_1000057964" description="Phosphoglycerate kinase">
    <location>
        <begin position="1"/>
        <end position="394"/>
    </location>
</feature>
<feature type="binding site" evidence="1">
    <location>
        <begin position="21"/>
        <end position="23"/>
    </location>
    <ligand>
        <name>substrate</name>
    </ligand>
</feature>
<feature type="binding site" evidence="1">
    <location>
        <position position="36"/>
    </location>
    <ligand>
        <name>substrate</name>
    </ligand>
</feature>
<feature type="binding site" evidence="1">
    <location>
        <begin position="59"/>
        <end position="62"/>
    </location>
    <ligand>
        <name>substrate</name>
    </ligand>
</feature>
<feature type="binding site" evidence="1">
    <location>
        <position position="118"/>
    </location>
    <ligand>
        <name>substrate</name>
    </ligand>
</feature>
<feature type="binding site" evidence="1">
    <location>
        <position position="151"/>
    </location>
    <ligand>
        <name>substrate</name>
    </ligand>
</feature>
<feature type="binding site" evidence="1">
    <location>
        <position position="201"/>
    </location>
    <ligand>
        <name>ATP</name>
        <dbReference type="ChEBI" id="CHEBI:30616"/>
    </ligand>
</feature>
<feature type="binding site" evidence="1">
    <location>
        <position position="292"/>
    </location>
    <ligand>
        <name>ATP</name>
        <dbReference type="ChEBI" id="CHEBI:30616"/>
    </ligand>
</feature>
<feature type="binding site" evidence="1">
    <location>
        <position position="323"/>
    </location>
    <ligand>
        <name>ATP</name>
        <dbReference type="ChEBI" id="CHEBI:30616"/>
    </ligand>
</feature>
<feature type="binding site" evidence="1">
    <location>
        <begin position="350"/>
        <end position="353"/>
    </location>
    <ligand>
        <name>ATP</name>
        <dbReference type="ChEBI" id="CHEBI:30616"/>
    </ligand>
</feature>
<feature type="modified residue" description="Phosphoserine" evidence="1">
    <location>
        <position position="183"/>
    </location>
</feature>
<feature type="modified residue" description="Phosphothreonine" evidence="1">
    <location>
        <position position="299"/>
    </location>
</feature>
<accession>Q631L9</accession>
<reference key="1">
    <citation type="journal article" date="2006" name="J. Bacteriol.">
        <title>Pathogenomic sequence analysis of Bacillus cereus and Bacillus thuringiensis isolates closely related to Bacillus anthracis.</title>
        <authorList>
            <person name="Han C.S."/>
            <person name="Xie G."/>
            <person name="Challacombe J.F."/>
            <person name="Altherr M.R."/>
            <person name="Bhotika S.S."/>
            <person name="Bruce D."/>
            <person name="Campbell C.S."/>
            <person name="Campbell M.L."/>
            <person name="Chen J."/>
            <person name="Chertkov O."/>
            <person name="Cleland C."/>
            <person name="Dimitrijevic M."/>
            <person name="Doggett N.A."/>
            <person name="Fawcett J.J."/>
            <person name="Glavina T."/>
            <person name="Goodwin L.A."/>
            <person name="Hill K.K."/>
            <person name="Hitchcock P."/>
            <person name="Jackson P.J."/>
            <person name="Keim P."/>
            <person name="Kewalramani A.R."/>
            <person name="Longmire J."/>
            <person name="Lucas S."/>
            <person name="Malfatti S."/>
            <person name="McMurry K."/>
            <person name="Meincke L.J."/>
            <person name="Misra M."/>
            <person name="Moseman B.L."/>
            <person name="Mundt M."/>
            <person name="Munk A.C."/>
            <person name="Okinaka R.T."/>
            <person name="Parson-Quintana B."/>
            <person name="Reilly L.P."/>
            <person name="Richardson P."/>
            <person name="Robinson D.L."/>
            <person name="Rubin E."/>
            <person name="Saunders E."/>
            <person name="Tapia R."/>
            <person name="Tesmer J.G."/>
            <person name="Thayer N."/>
            <person name="Thompson L.S."/>
            <person name="Tice H."/>
            <person name="Ticknor L.O."/>
            <person name="Wills P.L."/>
            <person name="Brettin T.S."/>
            <person name="Gilna P."/>
        </authorList>
    </citation>
    <scope>NUCLEOTIDE SEQUENCE [LARGE SCALE GENOMIC DNA]</scope>
    <source>
        <strain>ZK / E33L</strain>
    </source>
</reference>
<organism>
    <name type="scientific">Bacillus cereus (strain ZK / E33L)</name>
    <dbReference type="NCBI Taxonomy" id="288681"/>
    <lineage>
        <taxon>Bacteria</taxon>
        <taxon>Bacillati</taxon>
        <taxon>Bacillota</taxon>
        <taxon>Bacilli</taxon>
        <taxon>Bacillales</taxon>
        <taxon>Bacillaceae</taxon>
        <taxon>Bacillus</taxon>
        <taxon>Bacillus cereus group</taxon>
    </lineage>
</organism>
<sequence length="394" mass="42330">MNKKSIRDVDLKGKRVFCRVDFNVPMKEGKITDETRIRAALPTIQYLVEQGAKVILASHLGRPKGQVVEEMRLTPVAARLGELLGKDVKKADEAFGPAVQEMVAAMNEGDVLVLENVRFYAGEEKNDAELAKEFAALADIFVNDAFGAAHRAHASTAGIADYLPAVSGLLMEKELEVLGKALSNPERPFTAIIGGAKVKDKIGVIRHLLDKVDNLIIGGGLAYTFVKALGHEIGLSLCEDDKIELAKEFMQLAKEKGVNFYMPVDVVITEEFSETATTKIVGIDSIPSNWEGVDIGPKTREIYADVIKNSKLVVWNGPMGVFEMTPFAEGTKAVGQALADAEGTYSVIGGGDSAAAVEKFGMADKMSHISTGGGASLEFMEGKELPGVVCLNDK</sequence>
<comment type="catalytic activity">
    <reaction evidence="1">
        <text>(2R)-3-phosphoglycerate + ATP = (2R)-3-phospho-glyceroyl phosphate + ADP</text>
        <dbReference type="Rhea" id="RHEA:14801"/>
        <dbReference type="ChEBI" id="CHEBI:30616"/>
        <dbReference type="ChEBI" id="CHEBI:57604"/>
        <dbReference type="ChEBI" id="CHEBI:58272"/>
        <dbReference type="ChEBI" id="CHEBI:456216"/>
        <dbReference type="EC" id="2.7.2.3"/>
    </reaction>
</comment>
<comment type="pathway">
    <text evidence="1">Carbohydrate degradation; glycolysis; pyruvate from D-glyceraldehyde 3-phosphate: step 2/5.</text>
</comment>
<comment type="subunit">
    <text evidence="1">Monomer.</text>
</comment>
<comment type="subcellular location">
    <subcellularLocation>
        <location evidence="1">Cytoplasm</location>
    </subcellularLocation>
</comment>
<comment type="similarity">
    <text evidence="1">Belongs to the phosphoglycerate kinase family.</text>
</comment>
<proteinExistence type="inferred from homology"/>
<gene>
    <name evidence="1" type="primary">pgk</name>
    <name type="ordered locus">BCE33L4827</name>
</gene>
<keyword id="KW-0067">ATP-binding</keyword>
<keyword id="KW-0963">Cytoplasm</keyword>
<keyword id="KW-0324">Glycolysis</keyword>
<keyword id="KW-0418">Kinase</keyword>
<keyword id="KW-0547">Nucleotide-binding</keyword>
<keyword id="KW-0597">Phosphoprotein</keyword>
<keyword id="KW-0808">Transferase</keyword>